<feature type="signal peptide" evidence="2">
    <location>
        <begin position="1"/>
        <end position="18"/>
    </location>
</feature>
<feature type="chain" id="PRO_0000269910" description="Uncharacterized lipoprotein RC0146">
    <location>
        <begin position="19"/>
        <end position="1153"/>
    </location>
</feature>
<feature type="transmembrane region" description="Helical" evidence="1">
    <location>
        <begin position="289"/>
        <end position="309"/>
    </location>
</feature>
<feature type="transmembrane region" description="Helical" evidence="1">
    <location>
        <begin position="393"/>
        <end position="413"/>
    </location>
</feature>
<feature type="transmembrane region" description="Helical" evidence="1">
    <location>
        <begin position="422"/>
        <end position="442"/>
    </location>
</feature>
<feature type="transmembrane region" description="Helical" evidence="1">
    <location>
        <begin position="457"/>
        <end position="477"/>
    </location>
</feature>
<feature type="lipid moiety-binding region" description="N-palmitoyl cysteine" evidence="2">
    <location>
        <position position="19"/>
    </location>
</feature>
<feature type="lipid moiety-binding region" description="S-diacylglycerol cysteine" evidence="2">
    <location>
        <position position="19"/>
    </location>
</feature>
<organism>
    <name type="scientific">Rickettsia conorii (strain ATCC VR-613 / Malish 7)</name>
    <dbReference type="NCBI Taxonomy" id="272944"/>
    <lineage>
        <taxon>Bacteria</taxon>
        <taxon>Pseudomonadati</taxon>
        <taxon>Pseudomonadota</taxon>
        <taxon>Alphaproteobacteria</taxon>
        <taxon>Rickettsiales</taxon>
        <taxon>Rickettsiaceae</taxon>
        <taxon>Rickettsieae</taxon>
        <taxon>Rickettsia</taxon>
        <taxon>spotted fever group</taxon>
    </lineage>
</organism>
<proteinExistence type="inferred from homology"/>
<reference key="1">
    <citation type="journal article" date="2001" name="Science">
        <title>Mechanisms of evolution in Rickettsia conorii and R. prowazekii.</title>
        <authorList>
            <person name="Ogata H."/>
            <person name="Audic S."/>
            <person name="Renesto-Audiffren P."/>
            <person name="Fournier P.-E."/>
            <person name="Barbe V."/>
            <person name="Samson D."/>
            <person name="Roux V."/>
            <person name="Cossart P."/>
            <person name="Weissenbach J."/>
            <person name="Claverie J.-M."/>
            <person name="Raoult D."/>
        </authorList>
    </citation>
    <scope>NUCLEOTIDE SEQUENCE [LARGE SCALE GENOMIC DNA]</scope>
    <source>
        <strain>ATCC VR-613 / Malish 7</strain>
    </source>
</reference>
<accession>Q92JC1</accession>
<keyword id="KW-1003">Cell membrane</keyword>
<keyword id="KW-0449">Lipoprotein</keyword>
<keyword id="KW-0472">Membrane</keyword>
<keyword id="KW-0564">Palmitate</keyword>
<keyword id="KW-0732">Signal</keyword>
<keyword id="KW-0812">Transmembrane</keyword>
<keyword id="KW-1133">Transmembrane helix</keyword>
<name>Y146_RICCN</name>
<gene>
    <name type="ordered locus">RC0146</name>
</gene>
<evidence type="ECO:0000255" key="1"/>
<evidence type="ECO:0000255" key="2">
    <source>
        <dbReference type="PROSITE-ProRule" id="PRU00303"/>
    </source>
</evidence>
<evidence type="ECO:0000305" key="3"/>
<comment type="subcellular location">
    <subcellularLocation>
        <location evidence="2">Cell membrane</location>
        <topology evidence="3">Multi-pass membrane protein</topology>
    </subcellularLocation>
    <subcellularLocation>
        <location evidence="2">Cell membrane</location>
        <topology evidence="2">Lipid-anchor</topology>
    </subcellularLocation>
</comment>
<comment type="similarity">
    <text evidence="3">Belongs to the TrbL/VirB6 family.</text>
</comment>
<protein>
    <recommendedName>
        <fullName>Uncharacterized lipoprotein RC0146</fullName>
    </recommendedName>
</protein>
<sequence length="1153" mass="131619">MNKNIFITLLISLLLLSGCTGDTCIDPDDFGFIKFNVSARYDPEEITSRQEGNQVAPWRDSAYKVNGYPLTIMVRPWSYILGDKNTSGQLSAWCPWYGQKNNTTTLAAFCVKLQPCTFWDNTRLDMCTPNPANQNDAMISNAPCIMTNGVGLYFLIAAKNTDPNISPDSQSKPQGITQHLGEELTSGYEFYSTSSTGQFSKAGGINYQYKGEDKSKYAQSPLYFKIIDKFYNDNSGQYRLVIKSGVTDTRADPLQFLTDLIKGVLFGKDGIIKKTYQQIIDTSGYRMSVSAILTLYIMFTGFSFLIGNINLTHVELIVRILKVSIVSILLSTDKAWTFFHDYLFVFFIDGVQQILQIINEASATGPGSQSLLGLLISPQTLSKLFSLLFVDWLGFIYIILYLIALYFIFFLIFKATIIYLTALITIGMIIIMGPIFICFMLFNITRSLFENWLRQLISYALQPIILFTGIAFISMIIRTEIYSTLGFAVCKHDFPNLGPINEIFGSFLEDIDPSLGHSIFYWWFPVPMKGGINNFHKANILVPKDHIVVDDSCKNDPDKCKHCAAYECIDERYIELPFLDLVKDAKRISNFINGKFVQLDGILLIFVSIYLLSKFNDTAISTAQFIAGTSGNLTEIQKVNQQSYESAAKQMNRPLNYVAKTVSAPVTSRVSAGKEQVRMFFAEKFENMMMGRLEKQALGSSANKTVQNEVKRKYGIDSKDVKMNAITDYENGIAGLLKNLPKGNELKAKELSQMKFTQLRDKIAANKYGVKDYAALSKEQKAELDKSLKDANLRELASDANFTRDYQDAYKNAHQEMSGRGVGLFGKNIGVLRSWQEIKHRVDTKRKLKEEKRVGIGEKIYAGYTGIKRGVLTAIVGKDLRDAYEGNLTSAEWHDFEYNDPRLRTYSEKLKDDEKAREHEELQMHINKEALAAQADILSPEYLARLEKAGRHSDVEYYQELAQRKLIHEVHGRLFEEGEPVMMGDRFMREKATDSQMRDMIDNAHRKHAEFIDGDRYIRRQEHYDIMHEKAQENLEQTYKELKDHFKRDDIKIEEMPALIAQKVKDTAEGAEIDQKITEELNNFNADVKNYEYSTEVLNKIEDRKQAITDEVNAQIDKINKYRENAKMQTYVKPIVNEGRKLRKLEDHLRNMK</sequence>
<dbReference type="EMBL" id="AE006914">
    <property type="protein sequence ID" value="AAL02684.1"/>
    <property type="molecule type" value="Genomic_DNA"/>
</dbReference>
<dbReference type="PIR" id="B97718">
    <property type="entry name" value="B97718"/>
</dbReference>
<dbReference type="RefSeq" id="WP_010976823.1">
    <property type="nucleotide sequence ID" value="NC_003103.1"/>
</dbReference>
<dbReference type="SMR" id="Q92JC1"/>
<dbReference type="GeneID" id="928043"/>
<dbReference type="KEGG" id="rco:RC0146"/>
<dbReference type="PATRIC" id="fig|272944.4.peg.170"/>
<dbReference type="HOGENOM" id="CLU_275941_0_0_5"/>
<dbReference type="Proteomes" id="UP000000816">
    <property type="component" value="Chromosome"/>
</dbReference>
<dbReference type="GO" id="GO:0005886">
    <property type="term" value="C:plasma membrane"/>
    <property type="evidence" value="ECO:0007669"/>
    <property type="project" value="UniProtKB-SubCell"/>
</dbReference>
<dbReference type="GO" id="GO:0030255">
    <property type="term" value="P:protein secretion by the type IV secretion system"/>
    <property type="evidence" value="ECO:0007669"/>
    <property type="project" value="InterPro"/>
</dbReference>
<dbReference type="InterPro" id="IPR007688">
    <property type="entry name" value="Conjugal_tfr_TrbL/VirB6"/>
</dbReference>
<dbReference type="Pfam" id="PF04610">
    <property type="entry name" value="TrbL"/>
    <property type="match status" value="1"/>
</dbReference>
<dbReference type="PROSITE" id="PS51257">
    <property type="entry name" value="PROKAR_LIPOPROTEIN"/>
    <property type="match status" value="1"/>
</dbReference>